<comment type="subcellular location">
    <subcellularLocation>
        <location evidence="1">Cell membrane</location>
        <topology evidence="1">Lipid-anchor</topology>
    </subcellularLocation>
</comment>
<evidence type="ECO:0000255" key="1">
    <source>
        <dbReference type="PROSITE-ProRule" id="PRU00303"/>
    </source>
</evidence>
<evidence type="ECO:0000256" key="2">
    <source>
        <dbReference type="SAM" id="MobiDB-lite"/>
    </source>
</evidence>
<gene>
    <name type="ordered locus">SE_1947</name>
</gene>
<name>Y1947_STAES</name>
<organism>
    <name type="scientific">Staphylococcus epidermidis (strain ATCC 12228 / FDA PCI 1200)</name>
    <dbReference type="NCBI Taxonomy" id="176280"/>
    <lineage>
        <taxon>Bacteria</taxon>
        <taxon>Bacillati</taxon>
        <taxon>Bacillota</taxon>
        <taxon>Bacilli</taxon>
        <taxon>Bacillales</taxon>
        <taxon>Staphylococcaceae</taxon>
        <taxon>Staphylococcus</taxon>
    </lineage>
</organism>
<reference key="1">
    <citation type="journal article" date="2003" name="Mol. Microbiol.">
        <title>Genome-based analysis of virulence genes in a non-biofilm-forming Staphylococcus epidermidis strain (ATCC 12228).</title>
        <authorList>
            <person name="Zhang Y.-Q."/>
            <person name="Ren S.-X."/>
            <person name="Li H.-L."/>
            <person name="Wang Y.-X."/>
            <person name="Fu G."/>
            <person name="Yang J."/>
            <person name="Qin Z.-Q."/>
            <person name="Miao Y.-G."/>
            <person name="Wang W.-Y."/>
            <person name="Chen R.-S."/>
            <person name="Shen Y."/>
            <person name="Chen Z."/>
            <person name="Yuan Z.-H."/>
            <person name="Zhao G.-P."/>
            <person name="Qu D."/>
            <person name="Danchin A."/>
            <person name="Wen Y.-M."/>
        </authorList>
    </citation>
    <scope>NUCLEOTIDE SEQUENCE [LARGE SCALE GENOMIC DNA]</scope>
    <source>
        <strain>ATCC 12228 / FDA PCI 1200</strain>
    </source>
</reference>
<dbReference type="EMBL" id="AE015929">
    <property type="protein sequence ID" value="AAO05588.1"/>
    <property type="molecule type" value="Genomic_DNA"/>
</dbReference>
<dbReference type="RefSeq" id="NP_765502.1">
    <property type="nucleotide sequence ID" value="NC_004461.1"/>
</dbReference>
<dbReference type="RefSeq" id="WP_002485541.1">
    <property type="nucleotide sequence ID" value="NC_004461.1"/>
</dbReference>
<dbReference type="SMR" id="Q8CN89"/>
<dbReference type="KEGG" id="sep:SE_1947"/>
<dbReference type="PATRIC" id="fig|176280.10.peg.1900"/>
<dbReference type="eggNOG" id="ENOG5030EVE">
    <property type="taxonomic scope" value="Bacteria"/>
</dbReference>
<dbReference type="HOGENOM" id="CLU_088585_0_0_9"/>
<dbReference type="OrthoDB" id="2414075at2"/>
<dbReference type="Proteomes" id="UP000001411">
    <property type="component" value="Chromosome"/>
</dbReference>
<dbReference type="GO" id="GO:0005886">
    <property type="term" value="C:plasma membrane"/>
    <property type="evidence" value="ECO:0007669"/>
    <property type="project" value="UniProtKB-SubCell"/>
</dbReference>
<dbReference type="PROSITE" id="PS51257">
    <property type="entry name" value="PROKAR_LIPOPROTEIN"/>
    <property type="match status" value="1"/>
</dbReference>
<accession>Q8CN89</accession>
<keyword id="KW-1003">Cell membrane</keyword>
<keyword id="KW-0449">Lipoprotein</keyword>
<keyword id="KW-0472">Membrane</keyword>
<keyword id="KW-0564">Palmitate</keyword>
<keyword id="KW-0732">Signal</keyword>
<proteinExistence type="inferred from homology"/>
<feature type="signal peptide" evidence="1">
    <location>
        <begin position="1"/>
        <end position="17"/>
    </location>
</feature>
<feature type="chain" id="PRO_0000296183" description="Uncharacterized lipoprotein SE_1947">
    <location>
        <begin position="18"/>
        <end position="215"/>
    </location>
</feature>
<feature type="region of interest" description="Disordered" evidence="2">
    <location>
        <begin position="17"/>
        <end position="110"/>
    </location>
</feature>
<feature type="compositionally biased region" description="Basic and acidic residues" evidence="2">
    <location>
        <begin position="25"/>
        <end position="69"/>
    </location>
</feature>
<feature type="compositionally biased region" description="Polar residues" evidence="2">
    <location>
        <begin position="70"/>
        <end position="95"/>
    </location>
</feature>
<feature type="compositionally biased region" description="Low complexity" evidence="2">
    <location>
        <begin position="96"/>
        <end position="110"/>
    </location>
</feature>
<feature type="lipid moiety-binding region" description="N-palmitoyl cysteine" evidence="1">
    <location>
        <position position="18"/>
    </location>
</feature>
<feature type="lipid moiety-binding region" description="S-diacylglycerol cysteine" evidence="1">
    <location>
        <position position="18"/>
    </location>
</feature>
<protein>
    <recommendedName>
        <fullName>Uncharacterized lipoprotein SE_1947</fullName>
    </recommendedName>
</protein>
<sequence>MKKVLASATILSLMLVGCSNGGNDESSHKDDSSKTEQKDKSSSQHDSKKDSKRNDTNNKQDNQENKSNKEQTSNQNSNAGEQRTSERPTTNSNGISSDNQNKQQQSVQDNQNKYVAPYQSENATRVARYLSPFEGDRSQALQQLPNFETALSIAKNEANMYGSENKSYNDYSIEQTEDGFRYVFSFKDPSKSNTYSIVTLNRQGQPTVVDPNFQP</sequence>